<sequence length="211" mass="22866">MSVTALGMMLIAYLCGSISSAILFCRIAGLPDPRQHGSGNPGATNVLRIGGKAAAATVLVFDVLKGMLPVWAAYALGVSPLYLGLTAIAACLGHIYPVFFHFRGGKGVATAFGAIAPIGWDLTGLMTGTWLLTVLLSGYSSLGAIVSALIAPFYVWWFKPQFTFPVAMLSCLILMRHHDNIQRLWRGQESKIWNKLRKKKQPEDEKTSPEE</sequence>
<comment type="function">
    <text evidence="1">Catalyzes the transfer of an acyl group from acyl-phosphate (acyl-PO(4)) to glycerol-3-phosphate (G3P) to form lysophosphatidic acid (LPA). This enzyme utilizes acyl-phosphate as fatty acyl donor, but not acyl-CoA or acyl-ACP.</text>
</comment>
<comment type="catalytic activity">
    <reaction evidence="1">
        <text>an acyl phosphate + sn-glycerol 3-phosphate = a 1-acyl-sn-glycero-3-phosphate + phosphate</text>
        <dbReference type="Rhea" id="RHEA:34075"/>
        <dbReference type="ChEBI" id="CHEBI:43474"/>
        <dbReference type="ChEBI" id="CHEBI:57597"/>
        <dbReference type="ChEBI" id="CHEBI:57970"/>
        <dbReference type="ChEBI" id="CHEBI:59918"/>
        <dbReference type="EC" id="2.3.1.275"/>
    </reaction>
</comment>
<comment type="pathway">
    <text evidence="1">Lipid metabolism; phospholipid metabolism.</text>
</comment>
<comment type="subunit">
    <text evidence="1">Probably interacts with PlsX.</text>
</comment>
<comment type="subcellular location">
    <subcellularLocation>
        <location evidence="1">Cell inner membrane</location>
        <topology evidence="1">Multi-pass membrane protein</topology>
    </subcellularLocation>
</comment>
<comment type="similarity">
    <text evidence="1">Belongs to the PlsY family.</text>
</comment>
<name>PLSY_PECCP</name>
<dbReference type="EC" id="2.3.1.275" evidence="1"/>
<dbReference type="EMBL" id="CP001657">
    <property type="protein sequence ID" value="ACT14427.1"/>
    <property type="molecule type" value="Genomic_DNA"/>
</dbReference>
<dbReference type="RefSeq" id="WP_015841557.1">
    <property type="nucleotide sequence ID" value="NC_012917.1"/>
</dbReference>
<dbReference type="SMR" id="C6DDM0"/>
<dbReference type="STRING" id="561230.PC1_3411"/>
<dbReference type="GeneID" id="67792684"/>
<dbReference type="KEGG" id="pct:PC1_3411"/>
<dbReference type="eggNOG" id="COG0344">
    <property type="taxonomic scope" value="Bacteria"/>
</dbReference>
<dbReference type="HOGENOM" id="CLU_081254_0_2_6"/>
<dbReference type="OrthoDB" id="9777124at2"/>
<dbReference type="UniPathway" id="UPA00085"/>
<dbReference type="Proteomes" id="UP000002736">
    <property type="component" value="Chromosome"/>
</dbReference>
<dbReference type="GO" id="GO:0005886">
    <property type="term" value="C:plasma membrane"/>
    <property type="evidence" value="ECO:0007669"/>
    <property type="project" value="UniProtKB-SubCell"/>
</dbReference>
<dbReference type="GO" id="GO:0043772">
    <property type="term" value="F:acyl-phosphate glycerol-3-phosphate acyltransferase activity"/>
    <property type="evidence" value="ECO:0007669"/>
    <property type="project" value="UniProtKB-UniRule"/>
</dbReference>
<dbReference type="GO" id="GO:0008654">
    <property type="term" value="P:phospholipid biosynthetic process"/>
    <property type="evidence" value="ECO:0007669"/>
    <property type="project" value="UniProtKB-UniRule"/>
</dbReference>
<dbReference type="HAMAP" id="MF_01043">
    <property type="entry name" value="PlsY"/>
    <property type="match status" value="1"/>
</dbReference>
<dbReference type="InterPro" id="IPR003811">
    <property type="entry name" value="G3P_acylTferase_PlsY"/>
</dbReference>
<dbReference type="NCBIfam" id="TIGR00023">
    <property type="entry name" value="glycerol-3-phosphate 1-O-acyltransferase PlsY"/>
    <property type="match status" value="1"/>
</dbReference>
<dbReference type="PANTHER" id="PTHR30309:SF0">
    <property type="entry name" value="GLYCEROL-3-PHOSPHATE ACYLTRANSFERASE-RELATED"/>
    <property type="match status" value="1"/>
</dbReference>
<dbReference type="PANTHER" id="PTHR30309">
    <property type="entry name" value="INNER MEMBRANE PROTEIN YGIH"/>
    <property type="match status" value="1"/>
</dbReference>
<dbReference type="Pfam" id="PF02660">
    <property type="entry name" value="G3P_acyltransf"/>
    <property type="match status" value="1"/>
</dbReference>
<dbReference type="SMART" id="SM01207">
    <property type="entry name" value="G3P_acyltransf"/>
    <property type="match status" value="1"/>
</dbReference>
<feature type="chain" id="PRO_1000213414" description="Glycerol-3-phosphate acyltransferase">
    <location>
        <begin position="1"/>
        <end position="211"/>
    </location>
</feature>
<feature type="transmembrane region" description="Helical" evidence="1">
    <location>
        <begin position="5"/>
        <end position="25"/>
    </location>
</feature>
<feature type="transmembrane region" description="Helical" evidence="1">
    <location>
        <begin position="80"/>
        <end position="100"/>
    </location>
</feature>
<feature type="transmembrane region" description="Helical" evidence="1">
    <location>
        <begin position="112"/>
        <end position="132"/>
    </location>
</feature>
<feature type="transmembrane region" description="Helical" evidence="1">
    <location>
        <begin position="138"/>
        <end position="158"/>
    </location>
</feature>
<reference key="1">
    <citation type="submission" date="2009-07" db="EMBL/GenBank/DDBJ databases">
        <title>Complete sequence of Pectobacterium carotovorum subsp. carotovorum PC1.</title>
        <authorList>
            <consortium name="US DOE Joint Genome Institute"/>
            <person name="Lucas S."/>
            <person name="Copeland A."/>
            <person name="Lapidus A."/>
            <person name="Glavina del Rio T."/>
            <person name="Tice H."/>
            <person name="Bruce D."/>
            <person name="Goodwin L."/>
            <person name="Pitluck S."/>
            <person name="Munk A.C."/>
            <person name="Brettin T."/>
            <person name="Detter J.C."/>
            <person name="Han C."/>
            <person name="Tapia R."/>
            <person name="Larimer F."/>
            <person name="Land M."/>
            <person name="Hauser L."/>
            <person name="Kyrpides N."/>
            <person name="Mikhailova N."/>
            <person name="Balakrishnan V."/>
            <person name="Glasner J."/>
            <person name="Perna N.T."/>
        </authorList>
    </citation>
    <scope>NUCLEOTIDE SEQUENCE [LARGE SCALE GENOMIC DNA]</scope>
    <source>
        <strain>PC1</strain>
    </source>
</reference>
<proteinExistence type="inferred from homology"/>
<evidence type="ECO:0000255" key="1">
    <source>
        <dbReference type="HAMAP-Rule" id="MF_01043"/>
    </source>
</evidence>
<protein>
    <recommendedName>
        <fullName evidence="1">Glycerol-3-phosphate acyltransferase</fullName>
    </recommendedName>
    <alternativeName>
        <fullName evidence="1">Acyl-PO4 G3P acyltransferase</fullName>
    </alternativeName>
    <alternativeName>
        <fullName evidence="1">Acyl-phosphate--glycerol-3-phosphate acyltransferase</fullName>
    </alternativeName>
    <alternativeName>
        <fullName evidence="1">G3P acyltransferase</fullName>
        <shortName evidence="1">GPAT</shortName>
        <ecNumber evidence="1">2.3.1.275</ecNumber>
    </alternativeName>
    <alternativeName>
        <fullName evidence="1">Lysophosphatidic acid synthase</fullName>
        <shortName evidence="1">LPA synthase</shortName>
    </alternativeName>
</protein>
<accession>C6DDM0</accession>
<gene>
    <name evidence="1" type="primary">plsY</name>
    <name type="ordered locus">PC1_3411</name>
</gene>
<organism>
    <name type="scientific">Pectobacterium carotovorum subsp. carotovorum (strain PC1)</name>
    <dbReference type="NCBI Taxonomy" id="561230"/>
    <lineage>
        <taxon>Bacteria</taxon>
        <taxon>Pseudomonadati</taxon>
        <taxon>Pseudomonadota</taxon>
        <taxon>Gammaproteobacteria</taxon>
        <taxon>Enterobacterales</taxon>
        <taxon>Pectobacteriaceae</taxon>
        <taxon>Pectobacterium</taxon>
    </lineage>
</organism>
<keyword id="KW-0997">Cell inner membrane</keyword>
<keyword id="KW-1003">Cell membrane</keyword>
<keyword id="KW-0444">Lipid biosynthesis</keyword>
<keyword id="KW-0443">Lipid metabolism</keyword>
<keyword id="KW-0472">Membrane</keyword>
<keyword id="KW-0594">Phospholipid biosynthesis</keyword>
<keyword id="KW-1208">Phospholipid metabolism</keyword>
<keyword id="KW-0808">Transferase</keyword>
<keyword id="KW-0812">Transmembrane</keyword>
<keyword id="KW-1133">Transmembrane helix</keyword>